<name>CHS2_DAUCA</name>
<sequence length="397" mass="43559">MANHNAEIEEIRKRQRAQGPANILAIGTATPSNCVYQADYPDYYFRITNSEHMSDLKLKFKRMCEKSMIRKRYMHITEEYLKENPNVCAYEAPSLDARQDLVVVEVPRLGKEAAAKAIKEWGHPKSKITHLIFCTTSGVDMPGADYQLTKLLGLRPSVKRFMMYQQGCFAGGTVLRLAKDLAENNTGARVLVVCSEITAVTFRGPSDSHLDSLVGQALFGDGAAAVIVGSDPDLSVERPLFQLISAAQTILPDSDGAIDGHLREVGLTFHLLKDVPGLISKNIEKSLKEAFGPIGISDWNSLFWIAHPGGPAILDQVELKLGLKEEKMRATRQVLSDYGNMSSACVLFILDEMRKKSIEEGKATTGDGLDWGVLFGFGPGLTVETVVLHSVPATITH</sequence>
<protein>
    <recommendedName>
        <fullName>Chalcone synthase 2</fullName>
        <ecNumber>2.3.1.74</ecNumber>
    </recommendedName>
    <alternativeName>
        <fullName>DcCHS2</fullName>
    </alternativeName>
    <alternativeName>
        <fullName>Naringenin-chalcone synthase 2</fullName>
    </alternativeName>
</protein>
<comment type="function">
    <text>The primary product of this enzyme is 4,2',4',6'-tetrahydroxychalcone (also termed naringenin-chalcone or chalcone) which can under specific conditions spontaneously isomerize into naringenin.</text>
</comment>
<comment type="catalytic activity">
    <reaction evidence="1">
        <text>(E)-4-coumaroyl-CoA + 3 malonyl-CoA + 3 H(+) = 2',4,4',6'-tetrahydroxychalcone + 3 CO2 + 4 CoA</text>
        <dbReference type="Rhea" id="RHEA:11128"/>
        <dbReference type="ChEBI" id="CHEBI:15378"/>
        <dbReference type="ChEBI" id="CHEBI:15413"/>
        <dbReference type="ChEBI" id="CHEBI:16526"/>
        <dbReference type="ChEBI" id="CHEBI:57287"/>
        <dbReference type="ChEBI" id="CHEBI:57384"/>
        <dbReference type="ChEBI" id="CHEBI:85008"/>
        <dbReference type="EC" id="2.3.1.74"/>
    </reaction>
</comment>
<comment type="pathway">
    <text>Secondary metabolite biosynthesis; flavonoid biosynthesis.</text>
</comment>
<comment type="similarity">
    <text evidence="2">Belongs to the thiolase-like superfamily. Chalcone/stilbene synthases family.</text>
</comment>
<feature type="chain" id="PRO_0000215971" description="Chalcone synthase 2">
    <location>
        <begin position="1"/>
        <end position="397"/>
    </location>
</feature>
<feature type="active site" evidence="1">
    <location>
        <position position="168"/>
    </location>
</feature>
<dbReference type="EC" id="2.3.1.74"/>
<dbReference type="EMBL" id="AJ006780">
    <property type="protein sequence ID" value="CAA07245.1"/>
    <property type="molecule type" value="mRNA"/>
</dbReference>
<dbReference type="SMR" id="Q9ZS40"/>
<dbReference type="UniPathway" id="UPA00154"/>
<dbReference type="GO" id="GO:0016210">
    <property type="term" value="F:naringenin-chalcone synthase activity"/>
    <property type="evidence" value="ECO:0007669"/>
    <property type="project" value="UniProtKB-EC"/>
</dbReference>
<dbReference type="GO" id="GO:0009813">
    <property type="term" value="P:flavonoid biosynthetic process"/>
    <property type="evidence" value="ECO:0007669"/>
    <property type="project" value="UniProtKB-UniPathway"/>
</dbReference>
<dbReference type="GO" id="GO:0030639">
    <property type="term" value="P:polyketide biosynthetic process"/>
    <property type="evidence" value="ECO:0007669"/>
    <property type="project" value="TreeGrafter"/>
</dbReference>
<dbReference type="CDD" id="cd00831">
    <property type="entry name" value="CHS_like"/>
    <property type="match status" value="1"/>
</dbReference>
<dbReference type="FunFam" id="3.40.47.10:FF:000014">
    <property type="entry name" value="Chalcone synthase 1"/>
    <property type="match status" value="1"/>
</dbReference>
<dbReference type="FunFam" id="3.40.47.10:FF:000025">
    <property type="entry name" value="Chalcone synthase 2"/>
    <property type="match status" value="1"/>
</dbReference>
<dbReference type="Gene3D" id="3.40.47.10">
    <property type="match status" value="2"/>
</dbReference>
<dbReference type="InterPro" id="IPR012328">
    <property type="entry name" value="Chalcone/stilbene_synt_C"/>
</dbReference>
<dbReference type="InterPro" id="IPR001099">
    <property type="entry name" value="Chalcone/stilbene_synt_N"/>
</dbReference>
<dbReference type="InterPro" id="IPR018088">
    <property type="entry name" value="Chalcone/stilbene_synthase_AS"/>
</dbReference>
<dbReference type="InterPro" id="IPR011141">
    <property type="entry name" value="Polyketide_synthase_type-III"/>
</dbReference>
<dbReference type="InterPro" id="IPR016039">
    <property type="entry name" value="Thiolase-like"/>
</dbReference>
<dbReference type="PANTHER" id="PTHR11877:SF14">
    <property type="entry name" value="CHALCONE SYNTHASE"/>
    <property type="match status" value="1"/>
</dbReference>
<dbReference type="PANTHER" id="PTHR11877">
    <property type="entry name" value="HYDROXYMETHYLGLUTARYL-COA SYNTHASE"/>
    <property type="match status" value="1"/>
</dbReference>
<dbReference type="Pfam" id="PF02797">
    <property type="entry name" value="Chal_sti_synt_C"/>
    <property type="match status" value="1"/>
</dbReference>
<dbReference type="Pfam" id="PF00195">
    <property type="entry name" value="Chal_sti_synt_N"/>
    <property type="match status" value="1"/>
</dbReference>
<dbReference type="PIRSF" id="PIRSF000451">
    <property type="entry name" value="PKS_III"/>
    <property type="match status" value="1"/>
</dbReference>
<dbReference type="SUPFAM" id="SSF53901">
    <property type="entry name" value="Thiolase-like"/>
    <property type="match status" value="2"/>
</dbReference>
<dbReference type="PROSITE" id="PS00441">
    <property type="entry name" value="CHALCONE_SYNTH"/>
    <property type="match status" value="1"/>
</dbReference>
<proteinExistence type="evidence at transcript level"/>
<reference key="1">
    <citation type="journal article" date="2000" name="Planta">
        <title>Isoforms of chalcone synthase in Daucus carota L. and their differential expression in organs from the European wild carrot and in ultraviolet-A-irradiated cell cultures.</title>
        <authorList>
            <person name="Hirner A.A."/>
            <person name="Seitz H.U."/>
        </authorList>
    </citation>
    <scope>NUCLEOTIDE SEQUENCE [MRNA]</scope>
</reference>
<gene>
    <name type="primary">CHS2</name>
</gene>
<accession>Q9ZS40</accession>
<keyword id="KW-0012">Acyltransferase</keyword>
<keyword id="KW-0284">Flavonoid biosynthesis</keyword>
<keyword id="KW-0808">Transferase</keyword>
<evidence type="ECO:0000255" key="1">
    <source>
        <dbReference type="PROSITE-ProRule" id="PRU10023"/>
    </source>
</evidence>
<evidence type="ECO:0000305" key="2"/>
<organism>
    <name type="scientific">Daucus carota</name>
    <name type="common">Wild carrot</name>
    <dbReference type="NCBI Taxonomy" id="4039"/>
    <lineage>
        <taxon>Eukaryota</taxon>
        <taxon>Viridiplantae</taxon>
        <taxon>Streptophyta</taxon>
        <taxon>Embryophyta</taxon>
        <taxon>Tracheophyta</taxon>
        <taxon>Spermatophyta</taxon>
        <taxon>Magnoliopsida</taxon>
        <taxon>eudicotyledons</taxon>
        <taxon>Gunneridae</taxon>
        <taxon>Pentapetalae</taxon>
        <taxon>asterids</taxon>
        <taxon>campanulids</taxon>
        <taxon>Apiales</taxon>
        <taxon>Apiaceae</taxon>
        <taxon>Apioideae</taxon>
        <taxon>Scandiceae</taxon>
        <taxon>Daucinae</taxon>
        <taxon>Daucus</taxon>
        <taxon>Daucus sect. Daucus</taxon>
    </lineage>
</organism>